<keyword id="KW-0106">Calcium</keyword>
<keyword id="KW-0130">Cell adhesion</keyword>
<keyword id="KW-0965">Cell junction</keyword>
<keyword id="KW-1003">Cell membrane</keyword>
<keyword id="KW-0966">Cell projection</keyword>
<keyword id="KW-1015">Disulfide bond</keyword>
<keyword id="KW-0245">EGF-like domain</keyword>
<keyword id="KW-0325">Glycoprotein</keyword>
<keyword id="KW-0401">Integrin</keyword>
<keyword id="KW-0460">Magnesium</keyword>
<keyword id="KW-0472">Membrane</keyword>
<keyword id="KW-0479">Metal-binding</keyword>
<keyword id="KW-0517">Myogenesis</keyword>
<keyword id="KW-0597">Phosphoprotein</keyword>
<keyword id="KW-0675">Receptor</keyword>
<keyword id="KW-1185">Reference proteome</keyword>
<keyword id="KW-0677">Repeat</keyword>
<keyword id="KW-0732">Signal</keyword>
<keyword id="KW-0812">Transmembrane</keyword>
<keyword id="KW-1133">Transmembrane helix</keyword>
<proteinExistence type="evidence at transcript level"/>
<comment type="function">
    <text evidence="3 4">Beta integrins associate with alpha subunits to form receptor complexes that recognize the sequence R-G-D in a wide array of ligands. May be involved in osteoblast compaction (By similarity). May play role in myoblast differentiation and fusion during skeletal myogenesis (By similarity).</text>
</comment>
<comment type="subunit">
    <text>Heterodimer of an alpha and a beta subunit.</text>
</comment>
<comment type="subcellular location">
    <subcellularLocation>
        <location evidence="3">Cell membrane</location>
        <topology evidence="5">Single-pass type I membrane protein</topology>
    </subcellularLocation>
    <subcellularLocation>
        <location evidence="3">Cell projection</location>
        <location evidence="3">Invadopodium membrane</location>
        <topology evidence="5">Single-pass type I membrane protein</topology>
    </subcellularLocation>
    <subcellularLocation>
        <location evidence="3">Cell projection</location>
        <location evidence="3">Ruffle membrane</location>
        <topology evidence="5">Single-pass type I membrane protein</topology>
    </subcellularLocation>
    <subcellularLocation>
        <location evidence="1">Melanosome</location>
    </subcellularLocation>
    <subcellularLocation>
        <location evidence="1">Cleavage furrow</location>
    </subcellularLocation>
    <subcellularLocation>
        <location evidence="1">Cell projection</location>
        <location evidence="1">Lamellipodium</location>
    </subcellularLocation>
    <subcellularLocation>
        <location evidence="1">Cell projection</location>
        <location evidence="1">Ruffle</location>
    </subcellularLocation>
</comment>
<comment type="domain">
    <text evidence="3">The VWFA domain (or beta I domain) contains three cation-binding sites: the ligand-associated metal ion-binding site (LIMBS or SyMBS), the metal ion-dependent adhesion site (MIDAS), and the adjacent MIDAS site (ADMIDAS). This domain is also part of the ligand-binding site.</text>
</comment>
<comment type="similarity">
    <text evidence="8">Belongs to the integrin beta chain family.</text>
</comment>
<feature type="signal peptide">
    <location>
        <begin position="1"/>
        <end position="21"/>
    </location>
</feature>
<feature type="chain" id="PRO_0000016338" description="Integrin beta-1-A">
    <location>
        <begin position="22"/>
        <end position="798"/>
    </location>
</feature>
<feature type="topological domain" description="Extracellular" evidence="5">
    <location>
        <begin position="22"/>
        <end position="727"/>
    </location>
</feature>
<feature type="transmembrane region" description="Helical" evidence="5">
    <location>
        <begin position="728"/>
        <end position="751"/>
    </location>
</feature>
<feature type="topological domain" description="Cytoplasmic" evidence="5">
    <location>
        <begin position="752"/>
        <end position="798"/>
    </location>
</feature>
<feature type="domain" description="PSI" evidence="5">
    <location>
        <begin position="27"/>
        <end position="77"/>
    </location>
</feature>
<feature type="domain" description="VWFA" evidence="2">
    <location>
        <begin position="139"/>
        <end position="377"/>
    </location>
</feature>
<feature type="domain" description="I-EGF 1" evidence="6">
    <location>
        <begin position="466"/>
        <end position="501"/>
    </location>
</feature>
<feature type="domain" description="I-EGF 2" evidence="6">
    <location>
        <begin position="502"/>
        <end position="554"/>
    </location>
</feature>
<feature type="domain" description="I-EGF 3" evidence="6">
    <location>
        <begin position="555"/>
        <end position="591"/>
    </location>
</feature>
<feature type="domain" description="I-EGF 4" evidence="6">
    <location>
        <begin position="592"/>
        <end position="631"/>
    </location>
</feature>
<feature type="region of interest" description="Disordered" evidence="7">
    <location>
        <begin position="76"/>
        <end position="106"/>
    </location>
</feature>
<feature type="binding site" description="in MIDAS binding site" evidence="3">
    <location>
        <position position="151"/>
    </location>
    <ligand>
        <name>Mg(2+)</name>
        <dbReference type="ChEBI" id="CHEBI:18420"/>
    </ligand>
</feature>
<feature type="binding site" description="in ADMIDAS binding site" evidence="3">
    <location>
        <position position="153"/>
    </location>
    <ligand>
        <name>Ca(2+)</name>
        <dbReference type="ChEBI" id="CHEBI:29108"/>
        <label>1</label>
    </ligand>
</feature>
<feature type="binding site" description="in MIDAS binding site" evidence="3">
    <location>
        <position position="153"/>
    </location>
    <ligand>
        <name>Mg(2+)</name>
        <dbReference type="ChEBI" id="CHEBI:18420"/>
    </ligand>
</feature>
<feature type="binding site" description="in ADMIDAS binding site" evidence="3">
    <location>
        <position position="156"/>
    </location>
    <ligand>
        <name>Ca(2+)</name>
        <dbReference type="ChEBI" id="CHEBI:29108"/>
        <label>1</label>
    </ligand>
</feature>
<feature type="binding site" description="in ADMIDAS binding site" evidence="3">
    <location>
        <position position="157"/>
    </location>
    <ligand>
        <name>Ca(2+)</name>
        <dbReference type="ChEBI" id="CHEBI:29108"/>
        <label>1</label>
    </ligand>
</feature>
<feature type="binding site" description="in LIMBS binding site" evidence="3">
    <location>
        <position position="188"/>
    </location>
    <ligand>
        <name>Ca(2+)</name>
        <dbReference type="ChEBI" id="CHEBI:29108"/>
        <label>2</label>
    </ligand>
</feature>
<feature type="binding site" description="in LIMBS binding site" evidence="3">
    <location>
        <position position="243"/>
    </location>
    <ligand>
        <name>Ca(2+)</name>
        <dbReference type="ChEBI" id="CHEBI:29108"/>
        <label>2</label>
    </ligand>
</feature>
<feature type="binding site" description="in LIMBS binding site" evidence="3">
    <location>
        <position position="245"/>
    </location>
    <ligand>
        <name>Ca(2+)</name>
        <dbReference type="ChEBI" id="CHEBI:29108"/>
        <label>2</label>
    </ligand>
</feature>
<feature type="binding site" description="in LIMBS binding site" evidence="3">
    <location>
        <position position="247"/>
    </location>
    <ligand>
        <name>Ca(2+)</name>
        <dbReference type="ChEBI" id="CHEBI:29108"/>
        <label>2</label>
    </ligand>
</feature>
<feature type="binding site" description="in LIMBS binding site" evidence="3">
    <location>
        <position position="248"/>
    </location>
    <ligand>
        <name>Ca(2+)</name>
        <dbReference type="ChEBI" id="CHEBI:29108"/>
        <label>2</label>
    </ligand>
</feature>
<feature type="binding site" description="in MIDAS binding site" evidence="3">
    <location>
        <position position="248"/>
    </location>
    <ligand>
        <name>Mg(2+)</name>
        <dbReference type="ChEBI" id="CHEBI:18420"/>
    </ligand>
</feature>
<feature type="modified residue" description="Phosphotyrosine" evidence="1">
    <location>
        <position position="783"/>
    </location>
</feature>
<feature type="glycosylation site" description="N-linked (GlcNAc...) asparagine" evidence="5">
    <location>
        <position position="109"/>
    </location>
</feature>
<feature type="glycosylation site" description="N-linked (GlcNAc...) asparagine" evidence="5">
    <location>
        <position position="131"/>
    </location>
</feature>
<feature type="glycosylation site" description="N-linked (GlcNAc...) asparagine" evidence="5">
    <location>
        <position position="211"/>
    </location>
</feature>
<feature type="glycosylation site" description="N-linked (GlcNAc...) asparagine" evidence="5">
    <location>
        <position position="223"/>
    </location>
</feature>
<feature type="glycosylation site" description="N-linked (GlcNAc...) asparagine" evidence="5">
    <location>
        <position position="268"/>
    </location>
</feature>
<feature type="glycosylation site" description="N-linked (GlcNAc...) asparagine" evidence="5">
    <location>
        <position position="362"/>
    </location>
</feature>
<feature type="glycosylation site" description="N-linked (GlcNAc...) asparagine" evidence="5">
    <location>
        <position position="416"/>
    </location>
</feature>
<feature type="glycosylation site" description="N-linked (GlcNAc...) asparagine" evidence="5">
    <location>
        <position position="481"/>
    </location>
</feature>
<feature type="glycosylation site" description="N-linked (GlcNAc...) asparagine" evidence="5">
    <location>
        <position position="520"/>
    </location>
</feature>
<feature type="glycosylation site" description="N-linked (GlcNAc...) asparagine" evidence="5">
    <location>
        <position position="584"/>
    </location>
</feature>
<feature type="glycosylation site" description="N-linked (GlcNAc...) asparagine" evidence="5">
    <location>
        <position position="669"/>
    </location>
</feature>
<feature type="disulfide bond" evidence="3">
    <location>
        <begin position="28"/>
        <end position="46"/>
    </location>
</feature>
<feature type="disulfide bond" evidence="3">
    <location>
        <begin position="36"/>
        <end position="464"/>
    </location>
</feature>
<feature type="disulfide bond" evidence="3">
    <location>
        <begin position="39"/>
        <end position="65"/>
    </location>
</feature>
<feature type="disulfide bond" evidence="3">
    <location>
        <begin position="49"/>
        <end position="76"/>
    </location>
</feature>
<feature type="disulfide bond" evidence="3">
    <location>
        <begin position="206"/>
        <end position="212"/>
    </location>
</feature>
<feature type="disulfide bond" evidence="3">
    <location>
        <begin position="260"/>
        <end position="300"/>
    </location>
</feature>
<feature type="disulfide bond" evidence="3">
    <location>
        <begin position="400"/>
        <end position="414"/>
    </location>
</feature>
<feature type="disulfide bond" evidence="3">
    <location>
        <begin position="434"/>
        <end position="462"/>
    </location>
</feature>
<feature type="disulfide bond" evidence="6">
    <location>
        <begin position="466"/>
        <end position="486"/>
    </location>
</feature>
<feature type="disulfide bond" evidence="6">
    <location>
        <begin position="477"/>
        <end position="489"/>
    </location>
</feature>
<feature type="disulfide bond" evidence="6">
    <location>
        <begin position="491"/>
        <end position="500"/>
    </location>
</feature>
<feature type="disulfide bond" evidence="6">
    <location>
        <begin position="502"/>
        <end position="533"/>
    </location>
</feature>
<feature type="disulfide bond" evidence="6">
    <location>
        <begin position="516"/>
        <end position="531"/>
    </location>
</feature>
<feature type="disulfide bond" evidence="6">
    <location>
        <begin position="525"/>
        <end position="536"/>
    </location>
</feature>
<feature type="disulfide bond" evidence="6">
    <location>
        <begin position="538"/>
        <end position="553"/>
    </location>
</feature>
<feature type="disulfide bond" evidence="6">
    <location>
        <begin position="555"/>
        <end position="576"/>
    </location>
</feature>
<feature type="disulfide bond" evidence="6">
    <location>
        <begin position="560"/>
        <end position="574"/>
    </location>
</feature>
<feature type="disulfide bond" evidence="6">
    <location>
        <begin position="568"/>
        <end position="579"/>
    </location>
</feature>
<feature type="disulfide bond" evidence="6">
    <location>
        <begin position="581"/>
        <end position="590"/>
    </location>
</feature>
<feature type="disulfide bond" evidence="6">
    <location>
        <begin position="592"/>
        <end position="615"/>
    </location>
</feature>
<feature type="disulfide bond" evidence="6">
    <location>
        <begin position="599"/>
        <end position="613"/>
    </location>
</feature>
<feature type="disulfide bond" evidence="6">
    <location>
        <begin position="607"/>
        <end position="618"/>
    </location>
</feature>
<feature type="disulfide bond" evidence="6">
    <location>
        <begin position="620"/>
        <end position="630"/>
    </location>
</feature>
<feature type="disulfide bond" evidence="3">
    <location>
        <begin position="633"/>
        <end position="636"/>
    </location>
</feature>
<feature type="disulfide bond" evidence="3">
    <location>
        <begin position="640"/>
        <end position="691"/>
    </location>
</feature>
<feature type="disulfide bond" evidence="3">
    <location>
        <begin position="646"/>
        <end position="665"/>
    </location>
</feature>
<feature type="disulfide bond" evidence="3">
    <location>
        <begin position="649"/>
        <end position="661"/>
    </location>
</feature>
<feature type="disulfide bond" evidence="3">
    <location>
        <begin position="699"/>
        <end position="723"/>
    </location>
</feature>
<name>ITB1A_XENLA</name>
<dbReference type="EMBL" id="M20140">
    <property type="protein sequence ID" value="AAA49889.1"/>
    <property type="molecule type" value="mRNA"/>
</dbReference>
<dbReference type="EMBL" id="BC070558">
    <property type="protein sequence ID" value="AAH70558.1"/>
    <property type="molecule type" value="mRNA"/>
</dbReference>
<dbReference type="PIR" id="A28193">
    <property type="entry name" value="A28193"/>
</dbReference>
<dbReference type="RefSeq" id="NP_001081286.1">
    <property type="nucleotide sequence ID" value="NM_001087817.1"/>
</dbReference>
<dbReference type="SMR" id="P12606"/>
<dbReference type="BioGRID" id="99094">
    <property type="interactions" value="1"/>
</dbReference>
<dbReference type="GlyCosmos" id="P12606">
    <property type="glycosylation" value="11 sites, No reported glycans"/>
</dbReference>
<dbReference type="DNASU" id="397755"/>
<dbReference type="GeneID" id="397755"/>
<dbReference type="KEGG" id="xla:397755"/>
<dbReference type="AGR" id="Xenbase:XB-GENE-946731"/>
<dbReference type="CTD" id="397755"/>
<dbReference type="Xenbase" id="XB-GENE-946731">
    <property type="gene designation" value="itgb1.L"/>
</dbReference>
<dbReference type="OMA" id="NCVCGAC"/>
<dbReference type="OrthoDB" id="410592at2759"/>
<dbReference type="Proteomes" id="UP000186698">
    <property type="component" value="Chromosome 6L"/>
</dbReference>
<dbReference type="Bgee" id="397755">
    <property type="expression patterns" value="Expressed in egg cell and 19 other cell types or tissues"/>
</dbReference>
<dbReference type="GO" id="GO:0009986">
    <property type="term" value="C:cell surface"/>
    <property type="evidence" value="ECO:0000318"/>
    <property type="project" value="GO_Central"/>
</dbReference>
<dbReference type="GO" id="GO:0032154">
    <property type="term" value="C:cleavage furrow"/>
    <property type="evidence" value="ECO:0007669"/>
    <property type="project" value="UniProtKB-SubCell"/>
</dbReference>
<dbReference type="GO" id="GO:0005925">
    <property type="term" value="C:focal adhesion"/>
    <property type="evidence" value="ECO:0000318"/>
    <property type="project" value="GO_Central"/>
</dbReference>
<dbReference type="GO" id="GO:0008305">
    <property type="term" value="C:integrin complex"/>
    <property type="evidence" value="ECO:0000318"/>
    <property type="project" value="GO_Central"/>
</dbReference>
<dbReference type="GO" id="GO:0030027">
    <property type="term" value="C:lamellipodium"/>
    <property type="evidence" value="ECO:0007669"/>
    <property type="project" value="UniProtKB-SubCell"/>
</dbReference>
<dbReference type="GO" id="GO:0042470">
    <property type="term" value="C:melanosome"/>
    <property type="evidence" value="ECO:0007669"/>
    <property type="project" value="UniProtKB-SubCell"/>
</dbReference>
<dbReference type="GO" id="GO:0032587">
    <property type="term" value="C:ruffle membrane"/>
    <property type="evidence" value="ECO:0007669"/>
    <property type="project" value="UniProtKB-SubCell"/>
</dbReference>
<dbReference type="GO" id="GO:0045202">
    <property type="term" value="C:synapse"/>
    <property type="evidence" value="ECO:0000318"/>
    <property type="project" value="GO_Central"/>
</dbReference>
<dbReference type="GO" id="GO:0019960">
    <property type="term" value="F:C-X3-C chemokine binding"/>
    <property type="evidence" value="ECO:0007669"/>
    <property type="project" value="TreeGrafter"/>
</dbReference>
<dbReference type="GO" id="GO:0098639">
    <property type="term" value="F:collagen binding involved in cell-matrix adhesion"/>
    <property type="evidence" value="ECO:0000318"/>
    <property type="project" value="GO_Central"/>
</dbReference>
<dbReference type="GO" id="GO:0001968">
    <property type="term" value="F:fibronectin binding"/>
    <property type="evidence" value="ECO:0000318"/>
    <property type="project" value="GO_Central"/>
</dbReference>
<dbReference type="GO" id="GO:0005178">
    <property type="term" value="F:integrin binding"/>
    <property type="evidence" value="ECO:0000318"/>
    <property type="project" value="GO_Central"/>
</dbReference>
<dbReference type="GO" id="GO:0043236">
    <property type="term" value="F:laminin binding"/>
    <property type="evidence" value="ECO:0007669"/>
    <property type="project" value="TreeGrafter"/>
</dbReference>
<dbReference type="GO" id="GO:0046872">
    <property type="term" value="F:metal ion binding"/>
    <property type="evidence" value="ECO:0007669"/>
    <property type="project" value="UniProtKB-KW"/>
</dbReference>
<dbReference type="GO" id="GO:0019901">
    <property type="term" value="F:protein kinase binding"/>
    <property type="evidence" value="ECO:0000318"/>
    <property type="project" value="GO_Central"/>
</dbReference>
<dbReference type="GO" id="GO:0033627">
    <property type="term" value="P:cell adhesion mediated by integrin"/>
    <property type="evidence" value="ECO:0000318"/>
    <property type="project" value="GO_Central"/>
</dbReference>
<dbReference type="GO" id="GO:0016477">
    <property type="term" value="P:cell migration"/>
    <property type="evidence" value="ECO:0000318"/>
    <property type="project" value="GO_Central"/>
</dbReference>
<dbReference type="GO" id="GO:0098609">
    <property type="term" value="P:cell-cell adhesion"/>
    <property type="evidence" value="ECO:0000318"/>
    <property type="project" value="GO_Central"/>
</dbReference>
<dbReference type="GO" id="GO:0007160">
    <property type="term" value="P:cell-matrix adhesion"/>
    <property type="evidence" value="ECO:0000318"/>
    <property type="project" value="GO_Central"/>
</dbReference>
<dbReference type="GO" id="GO:0007229">
    <property type="term" value="P:integrin-mediated signaling pathway"/>
    <property type="evidence" value="ECO:0000318"/>
    <property type="project" value="GO_Central"/>
</dbReference>
<dbReference type="GO" id="GO:0007517">
    <property type="term" value="P:muscle organ development"/>
    <property type="evidence" value="ECO:0007669"/>
    <property type="project" value="UniProtKB-KW"/>
</dbReference>
<dbReference type="GO" id="GO:0045445">
    <property type="term" value="P:myoblast differentiation"/>
    <property type="evidence" value="ECO:0000250"/>
    <property type="project" value="UniProtKB"/>
</dbReference>
<dbReference type="GO" id="GO:0007520">
    <property type="term" value="P:myoblast fusion"/>
    <property type="evidence" value="ECO:0000250"/>
    <property type="project" value="UniProtKB"/>
</dbReference>
<dbReference type="FunFam" id="1.20.5.100:FF:000002">
    <property type="entry name" value="Integrin beta"/>
    <property type="match status" value="1"/>
</dbReference>
<dbReference type="FunFam" id="2.10.25.10:FF:000043">
    <property type="entry name" value="Integrin beta"/>
    <property type="match status" value="1"/>
</dbReference>
<dbReference type="FunFam" id="2.10.25.10:FF:000075">
    <property type="entry name" value="Integrin beta"/>
    <property type="match status" value="1"/>
</dbReference>
<dbReference type="FunFam" id="2.10.25.10:FF:000155">
    <property type="entry name" value="Integrin beta"/>
    <property type="match status" value="1"/>
</dbReference>
<dbReference type="FunFam" id="2.60.40.1510:FF:000003">
    <property type="entry name" value="Integrin beta"/>
    <property type="match status" value="1"/>
</dbReference>
<dbReference type="FunFam" id="3.30.1680.10:FF:000005">
    <property type="entry name" value="Integrin beta"/>
    <property type="match status" value="1"/>
</dbReference>
<dbReference type="FunFam" id="3.40.50.410:FF:000002">
    <property type="entry name" value="Integrin beta"/>
    <property type="match status" value="1"/>
</dbReference>
<dbReference type="FunFam" id="4.10.1240.30:FF:000002">
    <property type="entry name" value="Integrin beta"/>
    <property type="match status" value="1"/>
</dbReference>
<dbReference type="Gene3D" id="4.10.1240.30">
    <property type="match status" value="1"/>
</dbReference>
<dbReference type="Gene3D" id="1.20.5.100">
    <property type="entry name" value="Cytochrome c1, transmembrane anchor, C-terminal"/>
    <property type="match status" value="1"/>
</dbReference>
<dbReference type="Gene3D" id="2.10.25.10">
    <property type="entry name" value="Laminin"/>
    <property type="match status" value="4"/>
</dbReference>
<dbReference type="Gene3D" id="3.30.1680.10">
    <property type="entry name" value="ligand-binding face of the semaphorins, domain 2"/>
    <property type="match status" value="1"/>
</dbReference>
<dbReference type="Gene3D" id="2.60.40.1510">
    <property type="entry name" value="ntegrin, alpha v. Chain A, domain 3"/>
    <property type="match status" value="1"/>
</dbReference>
<dbReference type="Gene3D" id="3.40.50.410">
    <property type="entry name" value="von Willebrand factor, type A domain"/>
    <property type="match status" value="1"/>
</dbReference>
<dbReference type="InterPro" id="IPR013111">
    <property type="entry name" value="EGF_extracell"/>
</dbReference>
<dbReference type="InterPro" id="IPR040622">
    <property type="entry name" value="I-EGF_1"/>
</dbReference>
<dbReference type="InterPro" id="IPR033760">
    <property type="entry name" value="Integrin_beta_N"/>
</dbReference>
<dbReference type="InterPro" id="IPR015812">
    <property type="entry name" value="Integrin_bsu"/>
</dbReference>
<dbReference type="InterPro" id="IPR014836">
    <property type="entry name" value="Integrin_bsu_cyt_dom"/>
</dbReference>
<dbReference type="InterPro" id="IPR012896">
    <property type="entry name" value="Integrin_bsu_tail"/>
</dbReference>
<dbReference type="InterPro" id="IPR036349">
    <property type="entry name" value="Integrin_bsu_tail_dom_sf"/>
</dbReference>
<dbReference type="InterPro" id="IPR002369">
    <property type="entry name" value="Integrin_bsu_VWA"/>
</dbReference>
<dbReference type="InterPro" id="IPR032695">
    <property type="entry name" value="Integrin_dom_sf"/>
</dbReference>
<dbReference type="InterPro" id="IPR016201">
    <property type="entry name" value="PSI"/>
</dbReference>
<dbReference type="InterPro" id="IPR036465">
    <property type="entry name" value="vWFA_dom_sf"/>
</dbReference>
<dbReference type="PANTHER" id="PTHR10082">
    <property type="entry name" value="INTEGRIN BETA SUBUNIT"/>
    <property type="match status" value="1"/>
</dbReference>
<dbReference type="PANTHER" id="PTHR10082:SF28">
    <property type="entry name" value="INTEGRIN BETA-1"/>
    <property type="match status" value="1"/>
</dbReference>
<dbReference type="Pfam" id="PF07974">
    <property type="entry name" value="EGF_2"/>
    <property type="match status" value="1"/>
</dbReference>
<dbReference type="Pfam" id="PF23105">
    <property type="entry name" value="EGF_integrin"/>
    <property type="match status" value="1"/>
</dbReference>
<dbReference type="Pfam" id="PF18372">
    <property type="entry name" value="I-EGF_1"/>
    <property type="match status" value="1"/>
</dbReference>
<dbReference type="Pfam" id="PF08725">
    <property type="entry name" value="Integrin_b_cyt"/>
    <property type="match status" value="1"/>
</dbReference>
<dbReference type="Pfam" id="PF07965">
    <property type="entry name" value="Integrin_B_tail"/>
    <property type="match status" value="1"/>
</dbReference>
<dbReference type="Pfam" id="PF00362">
    <property type="entry name" value="Integrin_beta"/>
    <property type="match status" value="1"/>
</dbReference>
<dbReference type="Pfam" id="PF17205">
    <property type="entry name" value="PSI_integrin"/>
    <property type="match status" value="1"/>
</dbReference>
<dbReference type="PIRSF" id="PIRSF002512">
    <property type="entry name" value="Integrin_B"/>
    <property type="match status" value="1"/>
</dbReference>
<dbReference type="PRINTS" id="PR01186">
    <property type="entry name" value="INTEGRINB"/>
</dbReference>
<dbReference type="SMART" id="SM00187">
    <property type="entry name" value="INB"/>
    <property type="match status" value="1"/>
</dbReference>
<dbReference type="SMART" id="SM01241">
    <property type="entry name" value="Integrin_b_cyt"/>
    <property type="match status" value="1"/>
</dbReference>
<dbReference type="SMART" id="SM01242">
    <property type="entry name" value="Integrin_B_tail"/>
    <property type="match status" value="1"/>
</dbReference>
<dbReference type="SMART" id="SM00423">
    <property type="entry name" value="PSI"/>
    <property type="match status" value="1"/>
</dbReference>
<dbReference type="SUPFAM" id="SSF57196">
    <property type="entry name" value="EGF/Laminin"/>
    <property type="match status" value="2"/>
</dbReference>
<dbReference type="SUPFAM" id="SSF69687">
    <property type="entry name" value="Integrin beta tail domain"/>
    <property type="match status" value="1"/>
</dbReference>
<dbReference type="SUPFAM" id="SSF69179">
    <property type="entry name" value="Integrin domains"/>
    <property type="match status" value="1"/>
</dbReference>
<dbReference type="SUPFAM" id="SSF103575">
    <property type="entry name" value="Plexin repeat"/>
    <property type="match status" value="1"/>
</dbReference>
<dbReference type="SUPFAM" id="SSF53300">
    <property type="entry name" value="vWA-like"/>
    <property type="match status" value="1"/>
</dbReference>
<dbReference type="PROSITE" id="PS00022">
    <property type="entry name" value="EGF_1"/>
    <property type="match status" value="2"/>
</dbReference>
<dbReference type="PROSITE" id="PS00243">
    <property type="entry name" value="I_EGF_1"/>
    <property type="match status" value="3"/>
</dbReference>
<dbReference type="PROSITE" id="PS52047">
    <property type="entry name" value="I_EGF_2"/>
    <property type="match status" value="4"/>
</dbReference>
<reference key="1">
    <citation type="journal article" date="1988" name="J. Biol. Chem.">
        <title>Xenopus laevis integrins. Structural conservation and evolutionary divergence of integrin beta subunits.</title>
        <authorList>
            <person name="Desimone D.W."/>
            <person name="Hynes R.O."/>
        </authorList>
    </citation>
    <scope>NUCLEOTIDE SEQUENCE [MRNA]</scope>
</reference>
<reference key="2">
    <citation type="submission" date="2004-05" db="EMBL/GenBank/DDBJ databases">
        <authorList>
            <consortium name="NIH - Xenopus Gene Collection (XGC) project"/>
        </authorList>
    </citation>
    <scope>NUCLEOTIDE SEQUENCE [LARGE SCALE MRNA]</scope>
    <source>
        <tissue>Embryo</tissue>
    </source>
</reference>
<accession>P12606</accession>
<accession>Q6IRR8</accession>
<evidence type="ECO:0000250" key="1"/>
<evidence type="ECO:0000250" key="2">
    <source>
        <dbReference type="UniProtKB" id="P05106"/>
    </source>
</evidence>
<evidence type="ECO:0000250" key="3">
    <source>
        <dbReference type="UniProtKB" id="P05556"/>
    </source>
</evidence>
<evidence type="ECO:0000250" key="4">
    <source>
        <dbReference type="UniProtKB" id="P07228"/>
    </source>
</evidence>
<evidence type="ECO:0000255" key="5"/>
<evidence type="ECO:0000255" key="6">
    <source>
        <dbReference type="PROSITE-ProRule" id="PRU01392"/>
    </source>
</evidence>
<evidence type="ECO:0000256" key="7">
    <source>
        <dbReference type="SAM" id="MobiDB-lite"/>
    </source>
</evidence>
<evidence type="ECO:0000305" key="8"/>
<sequence length="798" mass="88167">MAHYPVFTVGLLTCLVLCINAQQGGTECLKANAKSCGECIQAGPNCGWCTKVDFLQEGEPTSARCDDLAALKSKGCPEDDIQNPRGRKQKLKDIPITSKGKGERMDPANITQLRPQQMVFELRSGEPQTFNLTFRRAEDYPIDLYYLMDLSFSMKDDLENVKSLGTALMTEMEKITSDFRIGFGSFVEKTVMPYISTTPAKLINPCTSDQNCTSPFSYKNVLNLTKDGKLFNDLVGKQQISGNLDSPEGGFDAIMQVAVCGEQIGWRNVTRLLVFSTDAGFHFAGDGKLGGIVLPNDGKCHLHENMYTMSHYYDYPSIAHLVQKLSENNIQTIFAVTEDFQPVYQELKNLIPKSAVGTLSSNSSNVIQLIIDSYNSLSSELILENSKLPEGVTISYKSFCKNGVKGTGEDGRKCSNISIGDQVEFEISVTAHKCPKKGQAESIKIKPLGFNEEVEIILQFLCECDCQDKGTPNSPECHFGNGTFECGACRCNDGRIGKECECSTDEVNSEDMDAYCRRENSSEICSNNGDCICGQCVCKKRDNPNEVYSGKYCECDNFNCDRSNGLICGGKGICKCRVCECFPNYSGSACDCSEDTSTCMAKNGQICNGRGICDCGRCKCTDPKFQGPTCELCQTCVGVCAEHKECVQCRAFQKGEKQDVCMEQCMHFNISLVDSREELPQPGQAEALTHCKEKDAEDCWFYFTYSVDSKNEVMVHVVKEPECPSGPDIIPIVAGVVAGIVLIGLALLLIWKLLMIIHDRREFAKFEKEKMNAKWDTGENPIYKSAVTTVVNPKYEGK</sequence>
<organism>
    <name type="scientific">Xenopus laevis</name>
    <name type="common">African clawed frog</name>
    <dbReference type="NCBI Taxonomy" id="8355"/>
    <lineage>
        <taxon>Eukaryota</taxon>
        <taxon>Metazoa</taxon>
        <taxon>Chordata</taxon>
        <taxon>Craniata</taxon>
        <taxon>Vertebrata</taxon>
        <taxon>Euteleostomi</taxon>
        <taxon>Amphibia</taxon>
        <taxon>Batrachia</taxon>
        <taxon>Anura</taxon>
        <taxon>Pipoidea</taxon>
        <taxon>Pipidae</taxon>
        <taxon>Xenopodinae</taxon>
        <taxon>Xenopus</taxon>
        <taxon>Xenopus</taxon>
    </lineage>
</organism>
<protein>
    <recommendedName>
        <fullName>Integrin beta-1-A</fullName>
    </recommendedName>
</protein>
<gene>
    <name type="primary">itgb1-a</name>
</gene>